<organismHost>
    <name type="scientific">Acanthamoeba polyphaga</name>
    <name type="common">Amoeba</name>
    <dbReference type="NCBI Taxonomy" id="5757"/>
</organismHost>
<organism>
    <name type="scientific">Acanthamoeba polyphaga mimivirus</name>
    <name type="common">APMV</name>
    <dbReference type="NCBI Taxonomy" id="212035"/>
    <lineage>
        <taxon>Viruses</taxon>
        <taxon>Varidnaviria</taxon>
        <taxon>Bamfordvirae</taxon>
        <taxon>Nucleocytoviricota</taxon>
        <taxon>Megaviricetes</taxon>
        <taxon>Imitervirales</taxon>
        <taxon>Mimiviridae</taxon>
        <taxon>Megamimivirinae</taxon>
        <taxon>Mimivirus</taxon>
        <taxon>Mimivirus bradfordmassiliense</taxon>
    </lineage>
</organism>
<dbReference type="EMBL" id="AY653733">
    <property type="protein sequence ID" value="AAV51111.1"/>
    <property type="molecule type" value="Genomic_DNA"/>
</dbReference>
<dbReference type="SMR" id="Q5UP28"/>
<dbReference type="Proteomes" id="UP000001134">
    <property type="component" value="Genome"/>
</dbReference>
<dbReference type="GO" id="GO:0016020">
    <property type="term" value="C:membrane"/>
    <property type="evidence" value="ECO:0007669"/>
    <property type="project" value="UniProtKB-SubCell"/>
</dbReference>
<dbReference type="Gene3D" id="1.25.40.80">
    <property type="match status" value="1"/>
</dbReference>
<dbReference type="InterPro" id="IPR036134">
    <property type="entry name" value="Crypto/Photolyase_FAD-like_sf"/>
</dbReference>
<dbReference type="InterPro" id="IPR052551">
    <property type="entry name" value="UV-DNA_repair_photolyase"/>
</dbReference>
<dbReference type="PANTHER" id="PTHR38657">
    <property type="entry name" value="SLR1343 PROTEIN"/>
    <property type="match status" value="1"/>
</dbReference>
<dbReference type="PANTHER" id="PTHR38657:SF1">
    <property type="entry name" value="SLR1343 PROTEIN"/>
    <property type="match status" value="1"/>
</dbReference>
<dbReference type="SUPFAM" id="SSF48173">
    <property type="entry name" value="Cryptochrome/photolyase FAD-binding domain"/>
    <property type="match status" value="1"/>
</dbReference>
<accession>Q5UP28</accession>
<name>YR853_MIMIV</name>
<keyword id="KW-0472">Membrane</keyword>
<keyword id="KW-1185">Reference proteome</keyword>
<keyword id="KW-0812">Transmembrane</keyword>
<keyword id="KW-1133">Transmembrane helix</keyword>
<reference key="1">
    <citation type="journal article" date="2004" name="Science">
        <title>The 1.2-megabase genome sequence of Mimivirus.</title>
        <authorList>
            <person name="Raoult D."/>
            <person name="Audic S."/>
            <person name="Robert C."/>
            <person name="Abergel C."/>
            <person name="Renesto P."/>
            <person name="Ogata H."/>
            <person name="La Scola B."/>
            <person name="Susan M."/>
            <person name="Claverie J.-M."/>
        </authorList>
    </citation>
    <scope>NUCLEOTIDE SEQUENCE [LARGE SCALE GENOMIC DNA]</scope>
    <source>
        <strain>Rowbotham-Bradford</strain>
    </source>
</reference>
<gene>
    <name type="ordered locus">MIMI_R853</name>
</gene>
<proteinExistence type="predicted"/>
<evidence type="ECO:0000255" key="1"/>
<evidence type="ECO:0000305" key="2"/>
<sequence length="129" mass="15442">MYEDAIDFDDPYLFHSVISPQLNSGLITPRYVLDKVIDKYNKSNTDLLYEVEGYIRQLVWREYSRMLYRYIRKDMMKNYFGNKNRISEIWYTGNTGIEPVDLAISSAFQYGLSTSNFFFIFLYIFTIKI</sequence>
<comment type="subcellular location">
    <subcellularLocation>
        <location evidence="2">Membrane</location>
        <topology evidence="2">Single-pass membrane protein</topology>
    </subcellularLocation>
</comment>
<protein>
    <recommendedName>
        <fullName>Uncharacterized protein R853</fullName>
    </recommendedName>
</protein>
<feature type="chain" id="PRO_0000253213" description="Uncharacterized protein R853">
    <location>
        <begin position="1"/>
        <end position="129"/>
    </location>
</feature>
<feature type="transmembrane region" description="Helical" evidence="1">
    <location>
        <begin position="103"/>
        <end position="125"/>
    </location>
</feature>